<dbReference type="EC" id="3.4.11.1" evidence="1"/>
<dbReference type="EC" id="3.4.11.10" evidence="1"/>
<dbReference type="EMBL" id="CP001139">
    <property type="protein sequence ID" value="ACH65710.1"/>
    <property type="molecule type" value="Genomic_DNA"/>
</dbReference>
<dbReference type="RefSeq" id="WP_005417534.1">
    <property type="nucleotide sequence ID" value="NC_011184.1"/>
</dbReference>
<dbReference type="SMR" id="B5F9Q6"/>
<dbReference type="MEROPS" id="M17.003"/>
<dbReference type="KEGG" id="vfm:VFMJ11_0403"/>
<dbReference type="HOGENOM" id="CLU_013734_2_2_6"/>
<dbReference type="Proteomes" id="UP000001857">
    <property type="component" value="Chromosome I"/>
</dbReference>
<dbReference type="GO" id="GO:0005737">
    <property type="term" value="C:cytoplasm"/>
    <property type="evidence" value="ECO:0007669"/>
    <property type="project" value="UniProtKB-SubCell"/>
</dbReference>
<dbReference type="GO" id="GO:0030145">
    <property type="term" value="F:manganese ion binding"/>
    <property type="evidence" value="ECO:0007669"/>
    <property type="project" value="UniProtKB-UniRule"/>
</dbReference>
<dbReference type="GO" id="GO:0070006">
    <property type="term" value="F:metalloaminopeptidase activity"/>
    <property type="evidence" value="ECO:0007669"/>
    <property type="project" value="InterPro"/>
</dbReference>
<dbReference type="GO" id="GO:0006508">
    <property type="term" value="P:proteolysis"/>
    <property type="evidence" value="ECO:0007669"/>
    <property type="project" value="UniProtKB-KW"/>
</dbReference>
<dbReference type="CDD" id="cd00433">
    <property type="entry name" value="Peptidase_M17"/>
    <property type="match status" value="1"/>
</dbReference>
<dbReference type="FunFam" id="3.40.220.10:FF:000001">
    <property type="entry name" value="Probable cytosol aminopeptidase"/>
    <property type="match status" value="1"/>
</dbReference>
<dbReference type="FunFam" id="3.40.630.10:FF:000004">
    <property type="entry name" value="Probable cytosol aminopeptidase"/>
    <property type="match status" value="1"/>
</dbReference>
<dbReference type="Gene3D" id="3.40.220.10">
    <property type="entry name" value="Leucine Aminopeptidase, subunit E, domain 1"/>
    <property type="match status" value="1"/>
</dbReference>
<dbReference type="Gene3D" id="3.40.630.10">
    <property type="entry name" value="Zn peptidases"/>
    <property type="match status" value="1"/>
</dbReference>
<dbReference type="HAMAP" id="MF_00181">
    <property type="entry name" value="Cytosol_peptidase_M17"/>
    <property type="match status" value="1"/>
</dbReference>
<dbReference type="InterPro" id="IPR011356">
    <property type="entry name" value="Leucine_aapep/pepB"/>
</dbReference>
<dbReference type="InterPro" id="IPR043472">
    <property type="entry name" value="Macro_dom-like"/>
</dbReference>
<dbReference type="InterPro" id="IPR000819">
    <property type="entry name" value="Peptidase_M17_C"/>
</dbReference>
<dbReference type="InterPro" id="IPR023042">
    <property type="entry name" value="Peptidase_M17_leu_NH2_pept"/>
</dbReference>
<dbReference type="InterPro" id="IPR008283">
    <property type="entry name" value="Peptidase_M17_N"/>
</dbReference>
<dbReference type="NCBIfam" id="NF002072">
    <property type="entry name" value="PRK00913.1-1"/>
    <property type="match status" value="1"/>
</dbReference>
<dbReference type="NCBIfam" id="NF002074">
    <property type="entry name" value="PRK00913.1-4"/>
    <property type="match status" value="1"/>
</dbReference>
<dbReference type="PANTHER" id="PTHR11963:SF23">
    <property type="entry name" value="CYTOSOL AMINOPEPTIDASE"/>
    <property type="match status" value="1"/>
</dbReference>
<dbReference type="PANTHER" id="PTHR11963">
    <property type="entry name" value="LEUCINE AMINOPEPTIDASE-RELATED"/>
    <property type="match status" value="1"/>
</dbReference>
<dbReference type="Pfam" id="PF00883">
    <property type="entry name" value="Peptidase_M17"/>
    <property type="match status" value="1"/>
</dbReference>
<dbReference type="Pfam" id="PF02789">
    <property type="entry name" value="Peptidase_M17_N"/>
    <property type="match status" value="1"/>
</dbReference>
<dbReference type="PRINTS" id="PR00481">
    <property type="entry name" value="LAMNOPPTDASE"/>
</dbReference>
<dbReference type="SUPFAM" id="SSF52949">
    <property type="entry name" value="Macro domain-like"/>
    <property type="match status" value="1"/>
</dbReference>
<dbReference type="SUPFAM" id="SSF53187">
    <property type="entry name" value="Zn-dependent exopeptidases"/>
    <property type="match status" value="1"/>
</dbReference>
<dbReference type="PROSITE" id="PS00631">
    <property type="entry name" value="CYTOSOL_AP"/>
    <property type="match status" value="1"/>
</dbReference>
<protein>
    <recommendedName>
        <fullName evidence="1">Probable cytosol aminopeptidase</fullName>
        <ecNumber evidence="1">3.4.11.1</ecNumber>
    </recommendedName>
    <alternativeName>
        <fullName evidence="1">Leucine aminopeptidase</fullName>
        <shortName evidence="1">LAP</shortName>
        <ecNumber evidence="1">3.4.11.10</ecNumber>
    </alternativeName>
    <alternativeName>
        <fullName evidence="1">Leucyl aminopeptidase</fullName>
    </alternativeName>
</protein>
<keyword id="KW-0031">Aminopeptidase</keyword>
<keyword id="KW-0963">Cytoplasm</keyword>
<keyword id="KW-0378">Hydrolase</keyword>
<keyword id="KW-0464">Manganese</keyword>
<keyword id="KW-0479">Metal-binding</keyword>
<keyword id="KW-0645">Protease</keyword>
<evidence type="ECO:0000255" key="1">
    <source>
        <dbReference type="HAMAP-Rule" id="MF_00181"/>
    </source>
</evidence>
<comment type="function">
    <text evidence="1">Presumably involved in the processing and regular turnover of intracellular proteins. Catalyzes the removal of unsubstituted N-terminal amino acids from various peptides.</text>
</comment>
<comment type="catalytic activity">
    <reaction evidence="1">
        <text>Release of an N-terminal amino acid, Xaa-|-Yaa-, in which Xaa is preferably Leu, but may be other amino acids including Pro although not Arg or Lys, and Yaa may be Pro. Amino acid amides and methyl esters are also readily hydrolyzed, but rates on arylamides are exceedingly low.</text>
        <dbReference type="EC" id="3.4.11.1"/>
    </reaction>
</comment>
<comment type="catalytic activity">
    <reaction evidence="1">
        <text>Release of an N-terminal amino acid, preferentially leucine, but not glutamic or aspartic acids.</text>
        <dbReference type="EC" id="3.4.11.10"/>
    </reaction>
</comment>
<comment type="cofactor">
    <cofactor evidence="1">
        <name>Mn(2+)</name>
        <dbReference type="ChEBI" id="CHEBI:29035"/>
    </cofactor>
    <text evidence="1">Binds 2 manganese ions per subunit.</text>
</comment>
<comment type="subcellular location">
    <subcellularLocation>
        <location evidence="1">Cytoplasm</location>
    </subcellularLocation>
</comment>
<comment type="similarity">
    <text evidence="1">Belongs to the peptidase M17 family.</text>
</comment>
<organism>
    <name type="scientific">Aliivibrio fischeri (strain MJ11)</name>
    <name type="common">Vibrio fischeri</name>
    <dbReference type="NCBI Taxonomy" id="388396"/>
    <lineage>
        <taxon>Bacteria</taxon>
        <taxon>Pseudomonadati</taxon>
        <taxon>Pseudomonadota</taxon>
        <taxon>Gammaproteobacteria</taxon>
        <taxon>Vibrionales</taxon>
        <taxon>Vibrionaceae</taxon>
        <taxon>Aliivibrio</taxon>
    </lineage>
</organism>
<name>AMPA_ALIFM</name>
<gene>
    <name evidence="1" type="primary">pepA</name>
    <name type="ordered locus">VFMJ11_0403</name>
</gene>
<reference key="1">
    <citation type="submission" date="2008-08" db="EMBL/GenBank/DDBJ databases">
        <title>Complete sequence of Vibrio fischeri strain MJ11.</title>
        <authorList>
            <person name="Mandel M.J."/>
            <person name="Stabb E.V."/>
            <person name="Ruby E.G."/>
            <person name="Ferriera S."/>
            <person name="Johnson J."/>
            <person name="Kravitz S."/>
            <person name="Beeson K."/>
            <person name="Sutton G."/>
            <person name="Rogers Y.-H."/>
            <person name="Friedman R."/>
            <person name="Frazier M."/>
            <person name="Venter J.C."/>
        </authorList>
    </citation>
    <scope>NUCLEOTIDE SEQUENCE [LARGE SCALE GENOMIC DNA]</scope>
    <source>
        <strain>MJ11</strain>
    </source>
</reference>
<accession>B5F9Q6</accession>
<proteinExistence type="inferred from homology"/>
<feature type="chain" id="PRO_1000098358" description="Probable cytosol aminopeptidase">
    <location>
        <begin position="1"/>
        <end position="502"/>
    </location>
</feature>
<feature type="active site" evidence="1">
    <location>
        <position position="281"/>
    </location>
</feature>
<feature type="active site" evidence="1">
    <location>
        <position position="355"/>
    </location>
</feature>
<feature type="binding site" evidence="1">
    <location>
        <position position="269"/>
    </location>
    <ligand>
        <name>Mn(2+)</name>
        <dbReference type="ChEBI" id="CHEBI:29035"/>
        <label>2</label>
    </ligand>
</feature>
<feature type="binding site" evidence="1">
    <location>
        <position position="274"/>
    </location>
    <ligand>
        <name>Mn(2+)</name>
        <dbReference type="ChEBI" id="CHEBI:29035"/>
        <label>1</label>
    </ligand>
</feature>
<feature type="binding site" evidence="1">
    <location>
        <position position="274"/>
    </location>
    <ligand>
        <name>Mn(2+)</name>
        <dbReference type="ChEBI" id="CHEBI:29035"/>
        <label>2</label>
    </ligand>
</feature>
<feature type="binding site" evidence="1">
    <location>
        <position position="292"/>
    </location>
    <ligand>
        <name>Mn(2+)</name>
        <dbReference type="ChEBI" id="CHEBI:29035"/>
        <label>2</label>
    </ligand>
</feature>
<feature type="binding site" evidence="1">
    <location>
        <position position="351"/>
    </location>
    <ligand>
        <name>Mn(2+)</name>
        <dbReference type="ChEBI" id="CHEBI:29035"/>
        <label>1</label>
    </ligand>
</feature>
<feature type="binding site" evidence="1">
    <location>
        <position position="353"/>
    </location>
    <ligand>
        <name>Mn(2+)</name>
        <dbReference type="ChEBI" id="CHEBI:29035"/>
        <label>1</label>
    </ligand>
</feature>
<feature type="binding site" evidence="1">
    <location>
        <position position="353"/>
    </location>
    <ligand>
        <name>Mn(2+)</name>
        <dbReference type="ChEBI" id="CHEBI:29035"/>
        <label>2</label>
    </ligand>
</feature>
<sequence>MEFSVKSGSPEKQRSACIVVGVFEPRRLSPIAEQLDKISGGYISSLLRRGDLEGKPGQMLLLHQVPNILSERVLLVGCGKERELGERQYKDIIKKTISTLNETGSMEAVCFLTELHVKGRDTYWKVRQAVESTKDSLYTFNQFKSNKPETRRPLRKLVFNVPTRRELNLGEKAIAHGLSIASGVKASKDLGNMPPNVANPAYLASQARRLADDYETVTTKIIGEEEMKKLGMTSYLAVGQGSHNESMMSIMEYKGHPDPTAKPIVLIGKGLTFDSGGISIKPSEGMDEMKYDMCGAASVFGAMKALAKLNLPLNVVGVLAGCENMPSSNSYRPGDILTTMSGQTVEVLNTDAEGRLVLCDALTYVERYEPECVVDVATLTGACVVALGHHISGLISNHNPLAHELINASEQSGDRAWRLPMAEEYNEQLSSPFADMGNIGGKAAGTITAGCFLSRFAKKYHWAHIDSAGTAWVSGANKGSTGRPVSLLVQFLLNRSGQENEE</sequence>